<comment type="function">
    <text evidence="1">The glycine cleavage system catalyzes the degradation of glycine. The H protein shuttles the methylamine group of glycine from the P protein to the T protein.</text>
</comment>
<comment type="cofactor">
    <cofactor evidence="1">
        <name>(R)-lipoate</name>
        <dbReference type="ChEBI" id="CHEBI:83088"/>
    </cofactor>
    <text evidence="1">Binds 1 lipoyl cofactor covalently.</text>
</comment>
<comment type="subunit">
    <text evidence="1">The glycine cleavage system is composed of four proteins: P, T, L and H.</text>
</comment>
<comment type="similarity">
    <text evidence="1">Belongs to the GcvH family.</text>
</comment>
<comment type="sequence caution" evidence="3">
    <conflict type="erroneous initiation">
        <sequence resource="EMBL-CDS" id="BAA30423"/>
    </conflict>
    <text>Extended N-terminus.</text>
</comment>
<protein>
    <recommendedName>
        <fullName evidence="1">Probable glycine cleavage system H protein</fullName>
    </recommendedName>
</protein>
<reference key="1">
    <citation type="journal article" date="1998" name="DNA Res.">
        <title>Complete sequence and gene organization of the genome of a hyper-thermophilic archaebacterium, Pyrococcus horikoshii OT3.</title>
        <authorList>
            <person name="Kawarabayasi Y."/>
            <person name="Sawada M."/>
            <person name="Horikawa H."/>
            <person name="Haikawa Y."/>
            <person name="Hino Y."/>
            <person name="Yamamoto S."/>
            <person name="Sekine M."/>
            <person name="Baba S."/>
            <person name="Kosugi H."/>
            <person name="Hosoyama A."/>
            <person name="Nagai Y."/>
            <person name="Sakai M."/>
            <person name="Ogura K."/>
            <person name="Otsuka R."/>
            <person name="Nakazawa H."/>
            <person name="Takamiya M."/>
            <person name="Ohfuku Y."/>
            <person name="Funahashi T."/>
            <person name="Tanaka T."/>
            <person name="Kudoh Y."/>
            <person name="Yamazaki J."/>
            <person name="Kushida N."/>
            <person name="Oguchi A."/>
            <person name="Aoki K."/>
            <person name="Yoshizawa T."/>
            <person name="Nakamura Y."/>
            <person name="Robb F.T."/>
            <person name="Horikoshi K."/>
            <person name="Masuchi Y."/>
            <person name="Shizuya H."/>
            <person name="Kikuchi H."/>
        </authorList>
    </citation>
    <scope>NUCLEOTIDE SEQUENCE [LARGE SCALE GENOMIC DNA]</scope>
    <source>
        <strain>ATCC 700860 / DSM 12428 / JCM 9974 / NBRC 100139 / OT-3</strain>
    </source>
</reference>
<organism>
    <name type="scientific">Pyrococcus horikoshii (strain ATCC 700860 / DSM 12428 / JCM 9974 / NBRC 100139 / OT-3)</name>
    <dbReference type="NCBI Taxonomy" id="70601"/>
    <lineage>
        <taxon>Archaea</taxon>
        <taxon>Methanobacteriati</taxon>
        <taxon>Methanobacteriota</taxon>
        <taxon>Thermococci</taxon>
        <taxon>Thermococcales</taxon>
        <taxon>Thermococcaceae</taxon>
        <taxon>Pyrococcus</taxon>
    </lineage>
</organism>
<feature type="chain" id="PRO_0000166277" description="Probable glycine cleavage system H protein">
    <location>
        <begin position="1"/>
        <end position="134"/>
    </location>
</feature>
<feature type="domain" description="Lipoyl-binding" evidence="2">
    <location>
        <begin position="29"/>
        <end position="110"/>
    </location>
</feature>
<feature type="modified residue" description="N6-lipoyllysine" evidence="1">
    <location>
        <position position="70"/>
    </location>
</feature>
<accession>O59049</accession>
<gene>
    <name evidence="1" type="primary">gcvH</name>
    <name type="ordered locus">PH1317</name>
</gene>
<name>GCSH_PYRHO</name>
<evidence type="ECO:0000255" key="1">
    <source>
        <dbReference type="HAMAP-Rule" id="MF_00272"/>
    </source>
</evidence>
<evidence type="ECO:0000255" key="2">
    <source>
        <dbReference type="PROSITE-ProRule" id="PRU01066"/>
    </source>
</evidence>
<evidence type="ECO:0000305" key="3"/>
<sequence length="134" mass="15076">MIEVGEYKVKEGLYYTKDHEWAQVLEDGTVLVGITDYAQKELGDLAYVELPEVGKEVSKGDVLCEVESVKAVSEVYAPVSGEVIEVNEELSDSPEKINEDPYGAWIAKIKPKNLEEELKELMDAEKYAEYLKTL</sequence>
<proteinExistence type="inferred from homology"/>
<keyword id="KW-0450">Lipoyl</keyword>
<dbReference type="EMBL" id="BA000001">
    <property type="protein sequence ID" value="BAA30423.1"/>
    <property type="status" value="ALT_INIT"/>
    <property type="molecule type" value="Genomic_DNA"/>
</dbReference>
<dbReference type="PIR" id="G71002">
    <property type="entry name" value="G71002"/>
</dbReference>
<dbReference type="RefSeq" id="WP_048053366.1">
    <property type="nucleotide sequence ID" value="NC_000961.1"/>
</dbReference>
<dbReference type="SMR" id="O59049"/>
<dbReference type="STRING" id="70601.gene:9378290"/>
<dbReference type="EnsemblBacteria" id="BAA30423">
    <property type="protein sequence ID" value="BAA30423"/>
    <property type="gene ID" value="BAA30423"/>
</dbReference>
<dbReference type="GeneID" id="1443646"/>
<dbReference type="KEGG" id="pho:PH1317"/>
<dbReference type="eggNOG" id="arCOG01303">
    <property type="taxonomic scope" value="Archaea"/>
</dbReference>
<dbReference type="OrthoDB" id="9810at2157"/>
<dbReference type="Proteomes" id="UP000000752">
    <property type="component" value="Chromosome"/>
</dbReference>
<dbReference type="GO" id="GO:0005737">
    <property type="term" value="C:cytoplasm"/>
    <property type="evidence" value="ECO:0007669"/>
    <property type="project" value="TreeGrafter"/>
</dbReference>
<dbReference type="GO" id="GO:0005960">
    <property type="term" value="C:glycine cleavage complex"/>
    <property type="evidence" value="ECO:0007669"/>
    <property type="project" value="InterPro"/>
</dbReference>
<dbReference type="GO" id="GO:0019464">
    <property type="term" value="P:glycine decarboxylation via glycine cleavage system"/>
    <property type="evidence" value="ECO:0007669"/>
    <property type="project" value="UniProtKB-UniRule"/>
</dbReference>
<dbReference type="CDD" id="cd06848">
    <property type="entry name" value="GCS_H"/>
    <property type="match status" value="1"/>
</dbReference>
<dbReference type="Gene3D" id="2.40.50.100">
    <property type="match status" value="1"/>
</dbReference>
<dbReference type="HAMAP" id="MF_00272">
    <property type="entry name" value="GcvH"/>
    <property type="match status" value="1"/>
</dbReference>
<dbReference type="InterPro" id="IPR003016">
    <property type="entry name" value="2-oxoA_DH_lipoyl-BS"/>
</dbReference>
<dbReference type="InterPro" id="IPR000089">
    <property type="entry name" value="Biotin_lipoyl"/>
</dbReference>
<dbReference type="InterPro" id="IPR002930">
    <property type="entry name" value="GCV_H"/>
</dbReference>
<dbReference type="InterPro" id="IPR033753">
    <property type="entry name" value="GCV_H/Fam206"/>
</dbReference>
<dbReference type="InterPro" id="IPR017453">
    <property type="entry name" value="GCV_H_sub"/>
</dbReference>
<dbReference type="InterPro" id="IPR011053">
    <property type="entry name" value="Single_hybrid_motif"/>
</dbReference>
<dbReference type="NCBIfam" id="TIGR00527">
    <property type="entry name" value="gcvH"/>
    <property type="match status" value="1"/>
</dbReference>
<dbReference type="NCBIfam" id="NF002270">
    <property type="entry name" value="PRK01202.1"/>
    <property type="match status" value="1"/>
</dbReference>
<dbReference type="PANTHER" id="PTHR11715">
    <property type="entry name" value="GLYCINE CLEAVAGE SYSTEM H PROTEIN"/>
    <property type="match status" value="1"/>
</dbReference>
<dbReference type="PANTHER" id="PTHR11715:SF3">
    <property type="entry name" value="GLYCINE CLEAVAGE SYSTEM H PROTEIN-RELATED"/>
    <property type="match status" value="1"/>
</dbReference>
<dbReference type="Pfam" id="PF01597">
    <property type="entry name" value="GCV_H"/>
    <property type="match status" value="1"/>
</dbReference>
<dbReference type="SUPFAM" id="SSF51230">
    <property type="entry name" value="Single hybrid motif"/>
    <property type="match status" value="1"/>
</dbReference>
<dbReference type="PROSITE" id="PS50968">
    <property type="entry name" value="BIOTINYL_LIPOYL"/>
    <property type="match status" value="1"/>
</dbReference>
<dbReference type="PROSITE" id="PS00189">
    <property type="entry name" value="LIPOYL"/>
    <property type="match status" value="1"/>
</dbReference>